<dbReference type="EMBL" id="AK014976">
    <property type="protein sequence ID" value="BAB29648.1"/>
    <property type="molecule type" value="mRNA"/>
</dbReference>
<dbReference type="CCDS" id="CCDS51745.1"/>
<dbReference type="RefSeq" id="NP_083162.1">
    <property type="nucleotide sequence ID" value="NM_028886.2"/>
</dbReference>
<dbReference type="SMR" id="Q9D5S7"/>
<dbReference type="FunCoup" id="Q9D5S7">
    <property type="interactions" value="170"/>
</dbReference>
<dbReference type="STRING" id="10090.ENSMUSP00000065146"/>
<dbReference type="iPTMnet" id="Q9D5S7"/>
<dbReference type="PhosphoSitePlus" id="Q9D5S7"/>
<dbReference type="jPOST" id="Q9D5S7"/>
<dbReference type="PaxDb" id="10090-ENSMUSP00000065146"/>
<dbReference type="PeptideAtlas" id="Q9D5S7"/>
<dbReference type="ProteomicsDB" id="287271"/>
<dbReference type="Antibodypedia" id="18051">
    <property type="antibodies" value="59 antibodies from 16 providers"/>
</dbReference>
<dbReference type="DNASU" id="74354"/>
<dbReference type="Ensembl" id="ENSMUST00000070189.10">
    <property type="protein sequence ID" value="ENSMUSP00000065146.4"/>
    <property type="gene ID" value="ENSMUSG00000056215.15"/>
</dbReference>
<dbReference type="GeneID" id="74354"/>
<dbReference type="KEGG" id="mmu:74354"/>
<dbReference type="UCSC" id="uc009bgv.1">
    <property type="organism name" value="mouse"/>
</dbReference>
<dbReference type="AGR" id="MGI:1921604"/>
<dbReference type="CTD" id="136332"/>
<dbReference type="MGI" id="MGI:1921604">
    <property type="gene designation" value="Lrguk"/>
</dbReference>
<dbReference type="VEuPathDB" id="HostDB:ENSMUSG00000056215"/>
<dbReference type="eggNOG" id="KOG0531">
    <property type="taxonomic scope" value="Eukaryota"/>
</dbReference>
<dbReference type="eggNOG" id="KOG0707">
    <property type="taxonomic scope" value="Eukaryota"/>
</dbReference>
<dbReference type="GeneTree" id="ENSGT00940000157992"/>
<dbReference type="HOGENOM" id="CLU_019293_0_0_1"/>
<dbReference type="InParanoid" id="Q9D5S7"/>
<dbReference type="PhylomeDB" id="Q9D5S7"/>
<dbReference type="TreeFam" id="TF329158"/>
<dbReference type="BioGRID-ORCS" id="74354">
    <property type="hits" value="4 hits in 77 CRISPR screens"/>
</dbReference>
<dbReference type="ChiTaRS" id="Lrguk">
    <property type="organism name" value="mouse"/>
</dbReference>
<dbReference type="PRO" id="PR:Q9D5S7"/>
<dbReference type="Proteomes" id="UP000000589">
    <property type="component" value="Chromosome 6"/>
</dbReference>
<dbReference type="RNAct" id="Q9D5S7">
    <property type="molecule type" value="protein"/>
</dbReference>
<dbReference type="Bgee" id="ENSMUSG00000056215">
    <property type="expression patterns" value="Expressed in spermatocyte and 48 other cell types or tissues"/>
</dbReference>
<dbReference type="ExpressionAtlas" id="Q9D5S7">
    <property type="expression patterns" value="baseline and differential"/>
</dbReference>
<dbReference type="GO" id="GO:0001669">
    <property type="term" value="C:acrosomal vesicle"/>
    <property type="evidence" value="ECO:0000314"/>
    <property type="project" value="UniProtKB"/>
</dbReference>
<dbReference type="GO" id="GO:0042995">
    <property type="term" value="C:cell projection"/>
    <property type="evidence" value="ECO:0007669"/>
    <property type="project" value="UniProtKB-KW"/>
</dbReference>
<dbReference type="GO" id="GO:0002177">
    <property type="term" value="C:manchette"/>
    <property type="evidence" value="ECO:0000314"/>
    <property type="project" value="UniProtKB"/>
</dbReference>
<dbReference type="GO" id="GO:0005524">
    <property type="term" value="F:ATP binding"/>
    <property type="evidence" value="ECO:0007669"/>
    <property type="project" value="UniProtKB-KW"/>
</dbReference>
<dbReference type="GO" id="GO:0016301">
    <property type="term" value="F:kinase activity"/>
    <property type="evidence" value="ECO:0007669"/>
    <property type="project" value="UniProtKB-KW"/>
</dbReference>
<dbReference type="GO" id="GO:0035082">
    <property type="term" value="P:axoneme assembly"/>
    <property type="evidence" value="ECO:0000314"/>
    <property type="project" value="UniProtKB"/>
</dbReference>
<dbReference type="GO" id="GO:0030154">
    <property type="term" value="P:cell differentiation"/>
    <property type="evidence" value="ECO:0007669"/>
    <property type="project" value="UniProtKB-KW"/>
</dbReference>
<dbReference type="GO" id="GO:0007283">
    <property type="term" value="P:spermatogenesis"/>
    <property type="evidence" value="ECO:0000315"/>
    <property type="project" value="UniProtKB"/>
</dbReference>
<dbReference type="CDD" id="cd00071">
    <property type="entry name" value="GMPK"/>
    <property type="match status" value="1"/>
</dbReference>
<dbReference type="FunFam" id="3.80.10.10:FF:000191">
    <property type="entry name" value="Leucine rich repeats and guanylate kinase domain containing"/>
    <property type="match status" value="1"/>
</dbReference>
<dbReference type="FunFam" id="3.80.10.10:FF:000238">
    <property type="entry name" value="Leucine rich repeats and guanylate kinase domain containing"/>
    <property type="match status" value="1"/>
</dbReference>
<dbReference type="FunFam" id="3.40.50.300:FF:000828">
    <property type="entry name" value="leucine-rich repeat and guanylate kinase domain-containing protein-like"/>
    <property type="match status" value="1"/>
</dbReference>
<dbReference type="Gene3D" id="3.40.50.300">
    <property type="entry name" value="P-loop containing nucleotide triphosphate hydrolases"/>
    <property type="match status" value="1"/>
</dbReference>
<dbReference type="Gene3D" id="3.80.10.10">
    <property type="entry name" value="Ribonuclease Inhibitor"/>
    <property type="match status" value="2"/>
</dbReference>
<dbReference type="InterPro" id="IPR008145">
    <property type="entry name" value="GK/Ca_channel_bsu"/>
</dbReference>
<dbReference type="InterPro" id="IPR008144">
    <property type="entry name" value="Guanylate_kin-like_dom"/>
</dbReference>
<dbReference type="InterPro" id="IPR001611">
    <property type="entry name" value="Leu-rich_rpt"/>
</dbReference>
<dbReference type="InterPro" id="IPR032675">
    <property type="entry name" value="LRR_dom_sf"/>
</dbReference>
<dbReference type="InterPro" id="IPR027417">
    <property type="entry name" value="P-loop_NTPase"/>
</dbReference>
<dbReference type="PANTHER" id="PTHR23117">
    <property type="entry name" value="GUANYLATE KINASE-RELATED"/>
    <property type="match status" value="1"/>
</dbReference>
<dbReference type="PANTHER" id="PTHR23117:SF18">
    <property type="entry name" value="LEUCINE-RICH REPEAT AND GUANYLATE KINASE DOMAIN-CONTAINING PROTEIN"/>
    <property type="match status" value="1"/>
</dbReference>
<dbReference type="Pfam" id="PF00625">
    <property type="entry name" value="Guanylate_kin"/>
    <property type="match status" value="1"/>
</dbReference>
<dbReference type="Pfam" id="PF00560">
    <property type="entry name" value="LRR_1"/>
    <property type="match status" value="1"/>
</dbReference>
<dbReference type="Pfam" id="PF14580">
    <property type="entry name" value="LRR_9"/>
    <property type="match status" value="1"/>
</dbReference>
<dbReference type="SMART" id="SM00072">
    <property type="entry name" value="GuKc"/>
    <property type="match status" value="1"/>
</dbReference>
<dbReference type="SMART" id="SM00365">
    <property type="entry name" value="LRR_SD22"/>
    <property type="match status" value="7"/>
</dbReference>
<dbReference type="SUPFAM" id="SSF52058">
    <property type="entry name" value="L domain-like"/>
    <property type="match status" value="1"/>
</dbReference>
<dbReference type="SUPFAM" id="SSF52540">
    <property type="entry name" value="P-loop containing nucleoside triphosphate hydrolases"/>
    <property type="match status" value="1"/>
</dbReference>
<dbReference type="PROSITE" id="PS50052">
    <property type="entry name" value="GUANYLATE_KINASE_2"/>
    <property type="match status" value="1"/>
</dbReference>
<dbReference type="PROSITE" id="PS51450">
    <property type="entry name" value="LRR"/>
    <property type="match status" value="10"/>
</dbReference>
<comment type="function">
    <text evidence="3 4">Involved in multiple aspects of sperm assembly including acrosome attachment, shaping of the sperm head and in the early aspects of axoneme development (PubMed:25781171). Not essential for primary cilium biogenesis (PubMed:28003339).</text>
</comment>
<comment type="subunit">
    <text evidence="3 4">Interacts (via guanylate kinase-like domain) with RIMBP3 (via coiled-coil region) (PubMed:28003339). Interacts (via guanylate kinase-like domain) with HOOK2 (PubMed:25781171, PubMed:28003339). Interacts (via LRRCT domain) with KLC3. Interacts with HOOK1 and HOOK3 (PubMed:28003339).</text>
</comment>
<comment type="subcellular location">
    <subcellularLocation>
        <location evidence="3 4">Cytoplasmic vesicle</location>
        <location evidence="3 4">Secretory vesicle</location>
        <location evidence="3 4">Acrosome</location>
    </subcellularLocation>
    <subcellularLocation>
        <location evidence="4">Cytoplasm</location>
        <location evidence="4">Cytoskeleton</location>
    </subcellularLocation>
    <subcellularLocation>
        <location evidence="4">Cytoplasm</location>
        <location evidence="4">Cytoskeleton</location>
        <location evidence="4">Cilium basal body</location>
    </subcellularLocation>
    <text evidence="3 4">Localizes to the acrosome and acroplaxome in round spermatids. Localizes to the manchette during spermiogenesis. Also found in the basal body of elongating spermatids, and in primary cilia of somatic cells.</text>
</comment>
<comment type="tissue specificity">
    <text evidence="3">Highly expressed in the testis (PubMed:25781171). During spermatid development is initially localized to a supra-nuclear region of round spermatids, and is particularly evident at the leading edge of the developing acrosome and acroplaxome. As maturation proceeded and nuclear elongation initiated, LRGUK moves distally to ultimately reside on the microtubules of the manchette. LRGUK is also evident in the sperm basal body and the sperm tail (PubMed:25781171).</text>
</comment>
<comment type="developmental stage">
    <text evidence="3">Detectable at low levels from birth, up-regulated at day 14 coincident with the appearance of pachytene spermatocytes, then maximal from day 18 coincident with the appearance of haploid germ cells (PubMed:25781171).</text>
</comment>
<comment type="miscellaneous">
    <text evidence="3">Mutagenesis with N-ethyl-N-nitrosourea (ENU) lead to the discovery of the Kaos phenotype. The Kaos mutation results in the conversion of Arg-528 to a stop codon. Homozygous males are oligoasthenoteratospermic and sterile.</text>
</comment>
<sequence>MAAFERNPSRWKGTRFRRGLGASRIAAQAILSLTEKQSQGRWPSFPLGLKSKGTFRSASSYLLHQLIHRSHEAEAEQEEKQQEDGESEESEESEMQNLEDKYDGILREETVAEAITGLGWSGRGTEQVYLNLNLSHCELVDISILCGYVHLQKLNLSGNRIEDLSCVSCMPYLLELNASQNKLTTFFNFKPPQNLKKVDFSSNLISEMYDLSAYHTLTQLILDNNEIEEITGLENCISLTHLSLAGNKITTIKGLGTLPIKVLSLSNNMIETITGLEELKALQNLDLSHNQISSLQGLENHDLLEVINLEDNKIKELSEIEYIENLPILRVLNLLRNPIQTKPEYWFFVIYMLLRLTELDQQKIKVEEKVFAVNKYDPPPEVVAVQDHMTHVVNSMSQPQRIWDSTLPSLDAPYPMLILTGPAACGKRELAHRLCRQFSTYFRYGACHTTRPPYFGEGDRVDYHFISQEVFDEMLNMGKFILTFNYGNHNYGLNRDTIEGIARDGLASCIHMELEGVRSLKYSYFEPRYILVVPMDKEKYEGYLRRKGLFSRAEIEIAVSRVDLYVKVNQKYPGYFDAVINADDMDIAYQKLSELIREYLGLTETAAKTLAPTADTKTSYLKCEDYSRKSSTVEFLDSTDRNYFTKLWAKLSSKKSPVERESLHRQHEAARQALMGKTPRDHTLLFQRGPVPIPTVSGQQYFATIDELQKTFELSDDLFKTPSGTYPETSKDSNISKRYSTYFHTCPWSKELPFQLPEGGISSRPGSAGSDEVDGALKALRVASSMQEKVAQHKRLSAITIMDPGSNTKPTLPPIPHGRR</sequence>
<evidence type="ECO:0000255" key="1">
    <source>
        <dbReference type="PROSITE-ProRule" id="PRU00100"/>
    </source>
</evidence>
<evidence type="ECO:0000256" key="2">
    <source>
        <dbReference type="SAM" id="MobiDB-lite"/>
    </source>
</evidence>
<evidence type="ECO:0000269" key="3">
    <source>
    </source>
</evidence>
<evidence type="ECO:0000269" key="4">
    <source>
    </source>
</evidence>
<feature type="chain" id="PRO_0000326409" description="Leucine-rich repeat and guanylate kinase domain-containing protein">
    <location>
        <begin position="1"/>
        <end position="820"/>
    </location>
</feature>
<feature type="repeat" description="LRR 1">
    <location>
        <begin position="129"/>
        <end position="149"/>
    </location>
</feature>
<feature type="repeat" description="LRR 2">
    <location>
        <begin position="150"/>
        <end position="171"/>
    </location>
</feature>
<feature type="repeat" description="LRR 3">
    <location>
        <begin position="172"/>
        <end position="193"/>
    </location>
</feature>
<feature type="repeat" description="LRR 4">
    <location>
        <begin position="194"/>
        <end position="215"/>
    </location>
</feature>
<feature type="repeat" description="LRR 5">
    <location>
        <begin position="216"/>
        <end position="237"/>
    </location>
</feature>
<feature type="repeat" description="LRR 6">
    <location>
        <begin position="238"/>
        <end position="259"/>
    </location>
</feature>
<feature type="repeat" description="LRR 7">
    <location>
        <begin position="260"/>
        <end position="280"/>
    </location>
</feature>
<feature type="repeat" description="LRR 8">
    <location>
        <begin position="281"/>
        <end position="302"/>
    </location>
</feature>
<feature type="repeat" description="LRR 9">
    <location>
        <begin position="303"/>
        <end position="324"/>
    </location>
</feature>
<feature type="domain" description="LRRCT">
    <location>
        <begin position="337"/>
        <end position="375"/>
    </location>
</feature>
<feature type="domain" description="Guanylate kinase-like" evidence="1">
    <location>
        <begin position="414"/>
        <end position="597"/>
    </location>
</feature>
<feature type="region of interest" description="Disordered" evidence="2">
    <location>
        <begin position="72"/>
        <end position="96"/>
    </location>
</feature>
<feature type="region of interest" description="Disordered" evidence="2">
    <location>
        <begin position="800"/>
        <end position="820"/>
    </location>
</feature>
<feature type="compositionally biased region" description="Basic and acidic residues" evidence="2">
    <location>
        <begin position="72"/>
        <end position="83"/>
    </location>
</feature>
<feature type="compositionally biased region" description="Acidic residues" evidence="2">
    <location>
        <begin position="84"/>
        <end position="94"/>
    </location>
</feature>
<feature type="compositionally biased region" description="Pro residues" evidence="2">
    <location>
        <begin position="811"/>
        <end position="820"/>
    </location>
</feature>
<feature type="binding site" evidence="1">
    <location>
        <begin position="421"/>
        <end position="428"/>
    </location>
    <ligand>
        <name>ATP</name>
        <dbReference type="ChEBI" id="CHEBI:30616"/>
    </ligand>
</feature>
<organism>
    <name type="scientific">Mus musculus</name>
    <name type="common">Mouse</name>
    <dbReference type="NCBI Taxonomy" id="10090"/>
    <lineage>
        <taxon>Eukaryota</taxon>
        <taxon>Metazoa</taxon>
        <taxon>Chordata</taxon>
        <taxon>Craniata</taxon>
        <taxon>Vertebrata</taxon>
        <taxon>Euteleostomi</taxon>
        <taxon>Mammalia</taxon>
        <taxon>Eutheria</taxon>
        <taxon>Euarchontoglires</taxon>
        <taxon>Glires</taxon>
        <taxon>Rodentia</taxon>
        <taxon>Myomorpha</taxon>
        <taxon>Muroidea</taxon>
        <taxon>Muridae</taxon>
        <taxon>Murinae</taxon>
        <taxon>Mus</taxon>
        <taxon>Mus</taxon>
    </lineage>
</organism>
<keyword id="KW-0067">ATP-binding</keyword>
<keyword id="KW-0966">Cell projection</keyword>
<keyword id="KW-0963">Cytoplasm</keyword>
<keyword id="KW-0968">Cytoplasmic vesicle</keyword>
<keyword id="KW-0206">Cytoskeleton</keyword>
<keyword id="KW-0221">Differentiation</keyword>
<keyword id="KW-0418">Kinase</keyword>
<keyword id="KW-0433">Leucine-rich repeat</keyword>
<keyword id="KW-0547">Nucleotide-binding</keyword>
<keyword id="KW-1185">Reference proteome</keyword>
<keyword id="KW-0677">Repeat</keyword>
<keyword id="KW-0744">Spermatogenesis</keyword>
<keyword id="KW-0808">Transferase</keyword>
<name>LRGUK_MOUSE</name>
<protein>
    <recommendedName>
        <fullName>Leucine-rich repeat and guanylate kinase domain-containing protein</fullName>
    </recommendedName>
</protein>
<accession>Q9D5S7</accession>
<proteinExistence type="evidence at protein level"/>
<reference key="1">
    <citation type="journal article" date="2005" name="Science">
        <title>The transcriptional landscape of the mammalian genome.</title>
        <authorList>
            <person name="Carninci P."/>
            <person name="Kasukawa T."/>
            <person name="Katayama S."/>
            <person name="Gough J."/>
            <person name="Frith M.C."/>
            <person name="Maeda N."/>
            <person name="Oyama R."/>
            <person name="Ravasi T."/>
            <person name="Lenhard B."/>
            <person name="Wells C."/>
            <person name="Kodzius R."/>
            <person name="Shimokawa K."/>
            <person name="Bajic V.B."/>
            <person name="Brenner S.E."/>
            <person name="Batalov S."/>
            <person name="Forrest A.R."/>
            <person name="Zavolan M."/>
            <person name="Davis M.J."/>
            <person name="Wilming L.G."/>
            <person name="Aidinis V."/>
            <person name="Allen J.E."/>
            <person name="Ambesi-Impiombato A."/>
            <person name="Apweiler R."/>
            <person name="Aturaliya R.N."/>
            <person name="Bailey T.L."/>
            <person name="Bansal M."/>
            <person name="Baxter L."/>
            <person name="Beisel K.W."/>
            <person name="Bersano T."/>
            <person name="Bono H."/>
            <person name="Chalk A.M."/>
            <person name="Chiu K.P."/>
            <person name="Choudhary V."/>
            <person name="Christoffels A."/>
            <person name="Clutterbuck D.R."/>
            <person name="Crowe M.L."/>
            <person name="Dalla E."/>
            <person name="Dalrymple B.P."/>
            <person name="de Bono B."/>
            <person name="Della Gatta G."/>
            <person name="di Bernardo D."/>
            <person name="Down T."/>
            <person name="Engstrom P."/>
            <person name="Fagiolini M."/>
            <person name="Faulkner G."/>
            <person name="Fletcher C.F."/>
            <person name="Fukushima T."/>
            <person name="Furuno M."/>
            <person name="Futaki S."/>
            <person name="Gariboldi M."/>
            <person name="Georgii-Hemming P."/>
            <person name="Gingeras T.R."/>
            <person name="Gojobori T."/>
            <person name="Green R.E."/>
            <person name="Gustincich S."/>
            <person name="Harbers M."/>
            <person name="Hayashi Y."/>
            <person name="Hensch T.K."/>
            <person name="Hirokawa N."/>
            <person name="Hill D."/>
            <person name="Huminiecki L."/>
            <person name="Iacono M."/>
            <person name="Ikeo K."/>
            <person name="Iwama A."/>
            <person name="Ishikawa T."/>
            <person name="Jakt M."/>
            <person name="Kanapin A."/>
            <person name="Katoh M."/>
            <person name="Kawasawa Y."/>
            <person name="Kelso J."/>
            <person name="Kitamura H."/>
            <person name="Kitano H."/>
            <person name="Kollias G."/>
            <person name="Krishnan S.P."/>
            <person name="Kruger A."/>
            <person name="Kummerfeld S.K."/>
            <person name="Kurochkin I.V."/>
            <person name="Lareau L.F."/>
            <person name="Lazarevic D."/>
            <person name="Lipovich L."/>
            <person name="Liu J."/>
            <person name="Liuni S."/>
            <person name="McWilliam S."/>
            <person name="Madan Babu M."/>
            <person name="Madera M."/>
            <person name="Marchionni L."/>
            <person name="Matsuda H."/>
            <person name="Matsuzawa S."/>
            <person name="Miki H."/>
            <person name="Mignone F."/>
            <person name="Miyake S."/>
            <person name="Morris K."/>
            <person name="Mottagui-Tabar S."/>
            <person name="Mulder N."/>
            <person name="Nakano N."/>
            <person name="Nakauchi H."/>
            <person name="Ng P."/>
            <person name="Nilsson R."/>
            <person name="Nishiguchi S."/>
            <person name="Nishikawa S."/>
            <person name="Nori F."/>
            <person name="Ohara O."/>
            <person name="Okazaki Y."/>
            <person name="Orlando V."/>
            <person name="Pang K.C."/>
            <person name="Pavan W.J."/>
            <person name="Pavesi G."/>
            <person name="Pesole G."/>
            <person name="Petrovsky N."/>
            <person name="Piazza S."/>
            <person name="Reed J."/>
            <person name="Reid J.F."/>
            <person name="Ring B.Z."/>
            <person name="Ringwald M."/>
            <person name="Rost B."/>
            <person name="Ruan Y."/>
            <person name="Salzberg S.L."/>
            <person name="Sandelin A."/>
            <person name="Schneider C."/>
            <person name="Schoenbach C."/>
            <person name="Sekiguchi K."/>
            <person name="Semple C.A."/>
            <person name="Seno S."/>
            <person name="Sessa L."/>
            <person name="Sheng Y."/>
            <person name="Shibata Y."/>
            <person name="Shimada H."/>
            <person name="Shimada K."/>
            <person name="Silva D."/>
            <person name="Sinclair B."/>
            <person name="Sperling S."/>
            <person name="Stupka E."/>
            <person name="Sugiura K."/>
            <person name="Sultana R."/>
            <person name="Takenaka Y."/>
            <person name="Taki K."/>
            <person name="Tammoja K."/>
            <person name="Tan S.L."/>
            <person name="Tang S."/>
            <person name="Taylor M.S."/>
            <person name="Tegner J."/>
            <person name="Teichmann S.A."/>
            <person name="Ueda H.R."/>
            <person name="van Nimwegen E."/>
            <person name="Verardo R."/>
            <person name="Wei C.L."/>
            <person name="Yagi K."/>
            <person name="Yamanishi H."/>
            <person name="Zabarovsky E."/>
            <person name="Zhu S."/>
            <person name="Zimmer A."/>
            <person name="Hide W."/>
            <person name="Bult C."/>
            <person name="Grimmond S.M."/>
            <person name="Teasdale R.D."/>
            <person name="Liu E.T."/>
            <person name="Brusic V."/>
            <person name="Quackenbush J."/>
            <person name="Wahlestedt C."/>
            <person name="Mattick J.S."/>
            <person name="Hume D.A."/>
            <person name="Kai C."/>
            <person name="Sasaki D."/>
            <person name="Tomaru Y."/>
            <person name="Fukuda S."/>
            <person name="Kanamori-Katayama M."/>
            <person name="Suzuki M."/>
            <person name="Aoki J."/>
            <person name="Arakawa T."/>
            <person name="Iida J."/>
            <person name="Imamura K."/>
            <person name="Itoh M."/>
            <person name="Kato T."/>
            <person name="Kawaji H."/>
            <person name="Kawagashira N."/>
            <person name="Kawashima T."/>
            <person name="Kojima M."/>
            <person name="Kondo S."/>
            <person name="Konno H."/>
            <person name="Nakano K."/>
            <person name="Ninomiya N."/>
            <person name="Nishio T."/>
            <person name="Okada M."/>
            <person name="Plessy C."/>
            <person name="Shibata K."/>
            <person name="Shiraki T."/>
            <person name="Suzuki S."/>
            <person name="Tagami M."/>
            <person name="Waki K."/>
            <person name="Watahiki A."/>
            <person name="Okamura-Oho Y."/>
            <person name="Suzuki H."/>
            <person name="Kawai J."/>
            <person name="Hayashizaki Y."/>
        </authorList>
    </citation>
    <scope>NUCLEOTIDE SEQUENCE [LARGE SCALE MRNA]</scope>
    <source>
        <strain>C57BL/6J</strain>
        <tissue>Testis</tissue>
    </source>
</reference>
<reference key="2">
    <citation type="journal article" date="2015" name="PLoS Genet.">
        <title>LRGUK-1 is required for basal body and manchette function during spermatogenesis and male fertility.</title>
        <authorList>
            <person name="Liu Y."/>
            <person name="DeBoer K."/>
            <person name="de Kretser D.M."/>
            <person name="O'Donnell L."/>
            <person name="O'Connor A.E."/>
            <person name="Merriner D.J."/>
            <person name="Okuda H."/>
            <person name="Whittle B."/>
            <person name="Jans D.A."/>
            <person name="Efthymiadis A."/>
            <person name="McLachlan R.I."/>
            <person name="Ormandy C.J."/>
            <person name="Goodnow C.C."/>
            <person name="Jamsai D."/>
            <person name="O'Bryan M.K."/>
        </authorList>
    </citation>
    <scope>TISSUE SPECIFICITY</scope>
    <scope>DEVELOPMENTAL STAGE</scope>
    <scope>INTERACTION WITH HOOK2</scope>
    <scope>FUNCTION</scope>
</reference>
<reference key="3">
    <citation type="journal article" date="2017" name="FASEB J.">
        <title>LRGUK1 is part of a multiprotein complex required for manchette function and male fertility.</title>
        <authorList>
            <person name="Okuda H."/>
            <person name="DeBoer K."/>
            <person name="O'Connor A.E."/>
            <person name="Merriner D.J."/>
            <person name="Jamsai D."/>
            <person name="O'Bryan M.K."/>
        </authorList>
    </citation>
    <scope>FUNCTION</scope>
    <scope>INTERACTION WITH RIMBP3; HOOK1; HOOK2; HOOK3 AND KLC3</scope>
    <scope>SUBCELLULAR LOCATION</scope>
</reference>
<gene>
    <name type="primary">Lrguk</name>
</gene>